<protein>
    <recommendedName>
        <fullName evidence="1">Cytoplasmic tRNA 2-thiolation protein 1</fullName>
        <ecNumber evidence="1">2.7.7.-</ecNumber>
    </recommendedName>
    <alternativeName>
        <fullName evidence="1">Cytoplasmic tRNA adenylyltransferase 1</fullName>
    </alternativeName>
</protein>
<reference key="1">
    <citation type="journal article" date="2000" name="Science">
        <title>The genome sequence of Drosophila melanogaster.</title>
        <authorList>
            <person name="Adams M.D."/>
            <person name="Celniker S.E."/>
            <person name="Holt R.A."/>
            <person name="Evans C.A."/>
            <person name="Gocayne J.D."/>
            <person name="Amanatides P.G."/>
            <person name="Scherer S.E."/>
            <person name="Li P.W."/>
            <person name="Hoskins R.A."/>
            <person name="Galle R.F."/>
            <person name="George R.A."/>
            <person name="Lewis S.E."/>
            <person name="Richards S."/>
            <person name="Ashburner M."/>
            <person name="Henderson S.N."/>
            <person name="Sutton G.G."/>
            <person name="Wortman J.R."/>
            <person name="Yandell M.D."/>
            <person name="Zhang Q."/>
            <person name="Chen L.X."/>
            <person name="Brandon R.C."/>
            <person name="Rogers Y.-H.C."/>
            <person name="Blazej R.G."/>
            <person name="Champe M."/>
            <person name="Pfeiffer B.D."/>
            <person name="Wan K.H."/>
            <person name="Doyle C."/>
            <person name="Baxter E.G."/>
            <person name="Helt G."/>
            <person name="Nelson C.R."/>
            <person name="Miklos G.L.G."/>
            <person name="Abril J.F."/>
            <person name="Agbayani A."/>
            <person name="An H.-J."/>
            <person name="Andrews-Pfannkoch C."/>
            <person name="Baldwin D."/>
            <person name="Ballew R.M."/>
            <person name="Basu A."/>
            <person name="Baxendale J."/>
            <person name="Bayraktaroglu L."/>
            <person name="Beasley E.M."/>
            <person name="Beeson K.Y."/>
            <person name="Benos P.V."/>
            <person name="Berman B.P."/>
            <person name="Bhandari D."/>
            <person name="Bolshakov S."/>
            <person name="Borkova D."/>
            <person name="Botchan M.R."/>
            <person name="Bouck J."/>
            <person name="Brokstein P."/>
            <person name="Brottier P."/>
            <person name="Burtis K.C."/>
            <person name="Busam D.A."/>
            <person name="Butler H."/>
            <person name="Cadieu E."/>
            <person name="Center A."/>
            <person name="Chandra I."/>
            <person name="Cherry J.M."/>
            <person name="Cawley S."/>
            <person name="Dahlke C."/>
            <person name="Davenport L.B."/>
            <person name="Davies P."/>
            <person name="de Pablos B."/>
            <person name="Delcher A."/>
            <person name="Deng Z."/>
            <person name="Mays A.D."/>
            <person name="Dew I."/>
            <person name="Dietz S.M."/>
            <person name="Dodson K."/>
            <person name="Doup L.E."/>
            <person name="Downes M."/>
            <person name="Dugan-Rocha S."/>
            <person name="Dunkov B.C."/>
            <person name="Dunn P."/>
            <person name="Durbin K.J."/>
            <person name="Evangelista C.C."/>
            <person name="Ferraz C."/>
            <person name="Ferriera S."/>
            <person name="Fleischmann W."/>
            <person name="Fosler C."/>
            <person name="Gabrielian A.E."/>
            <person name="Garg N.S."/>
            <person name="Gelbart W.M."/>
            <person name="Glasser K."/>
            <person name="Glodek A."/>
            <person name="Gong F."/>
            <person name="Gorrell J.H."/>
            <person name="Gu Z."/>
            <person name="Guan P."/>
            <person name="Harris M."/>
            <person name="Harris N.L."/>
            <person name="Harvey D.A."/>
            <person name="Heiman T.J."/>
            <person name="Hernandez J.R."/>
            <person name="Houck J."/>
            <person name="Hostin D."/>
            <person name="Houston K.A."/>
            <person name="Howland T.J."/>
            <person name="Wei M.-H."/>
            <person name="Ibegwam C."/>
            <person name="Jalali M."/>
            <person name="Kalush F."/>
            <person name="Karpen G.H."/>
            <person name="Ke Z."/>
            <person name="Kennison J.A."/>
            <person name="Ketchum K.A."/>
            <person name="Kimmel B.E."/>
            <person name="Kodira C.D."/>
            <person name="Kraft C.L."/>
            <person name="Kravitz S."/>
            <person name="Kulp D."/>
            <person name="Lai Z."/>
            <person name="Lasko P."/>
            <person name="Lei Y."/>
            <person name="Levitsky A.A."/>
            <person name="Li J.H."/>
            <person name="Li Z."/>
            <person name="Liang Y."/>
            <person name="Lin X."/>
            <person name="Liu X."/>
            <person name="Mattei B."/>
            <person name="McIntosh T.C."/>
            <person name="McLeod M.P."/>
            <person name="McPherson D."/>
            <person name="Merkulov G."/>
            <person name="Milshina N.V."/>
            <person name="Mobarry C."/>
            <person name="Morris J."/>
            <person name="Moshrefi A."/>
            <person name="Mount S.M."/>
            <person name="Moy M."/>
            <person name="Murphy B."/>
            <person name="Murphy L."/>
            <person name="Muzny D.M."/>
            <person name="Nelson D.L."/>
            <person name="Nelson D.R."/>
            <person name="Nelson K.A."/>
            <person name="Nixon K."/>
            <person name="Nusskern D.R."/>
            <person name="Pacleb J.M."/>
            <person name="Palazzolo M."/>
            <person name="Pittman G.S."/>
            <person name="Pan S."/>
            <person name="Pollard J."/>
            <person name="Puri V."/>
            <person name="Reese M.G."/>
            <person name="Reinert K."/>
            <person name="Remington K."/>
            <person name="Saunders R.D.C."/>
            <person name="Scheeler F."/>
            <person name="Shen H."/>
            <person name="Shue B.C."/>
            <person name="Siden-Kiamos I."/>
            <person name="Simpson M."/>
            <person name="Skupski M.P."/>
            <person name="Smith T.J."/>
            <person name="Spier E."/>
            <person name="Spradling A.C."/>
            <person name="Stapleton M."/>
            <person name="Strong R."/>
            <person name="Sun E."/>
            <person name="Svirskas R."/>
            <person name="Tector C."/>
            <person name="Turner R."/>
            <person name="Venter E."/>
            <person name="Wang A.H."/>
            <person name="Wang X."/>
            <person name="Wang Z.-Y."/>
            <person name="Wassarman D.A."/>
            <person name="Weinstock G.M."/>
            <person name="Weissenbach J."/>
            <person name="Williams S.M."/>
            <person name="Woodage T."/>
            <person name="Worley K.C."/>
            <person name="Wu D."/>
            <person name="Yang S."/>
            <person name="Yao Q.A."/>
            <person name="Ye J."/>
            <person name="Yeh R.-F."/>
            <person name="Zaveri J.S."/>
            <person name="Zhan M."/>
            <person name="Zhang G."/>
            <person name="Zhao Q."/>
            <person name="Zheng L."/>
            <person name="Zheng X.H."/>
            <person name="Zhong F.N."/>
            <person name="Zhong W."/>
            <person name="Zhou X."/>
            <person name="Zhu S.C."/>
            <person name="Zhu X."/>
            <person name="Smith H.O."/>
            <person name="Gibbs R.A."/>
            <person name="Myers E.W."/>
            <person name="Rubin G.M."/>
            <person name="Venter J.C."/>
        </authorList>
    </citation>
    <scope>NUCLEOTIDE SEQUENCE [LARGE SCALE GENOMIC DNA]</scope>
    <source>
        <strain>Berkeley</strain>
    </source>
</reference>
<reference key="2">
    <citation type="journal article" date="2002" name="Genome Biol.">
        <title>Annotation of the Drosophila melanogaster euchromatic genome: a systematic review.</title>
        <authorList>
            <person name="Misra S."/>
            <person name="Crosby M.A."/>
            <person name="Mungall C.J."/>
            <person name="Matthews B.B."/>
            <person name="Campbell K.S."/>
            <person name="Hradecky P."/>
            <person name="Huang Y."/>
            <person name="Kaminker J.S."/>
            <person name="Millburn G.H."/>
            <person name="Prochnik S.E."/>
            <person name="Smith C.D."/>
            <person name="Tupy J.L."/>
            <person name="Whitfield E.J."/>
            <person name="Bayraktaroglu L."/>
            <person name="Berman B.P."/>
            <person name="Bettencourt B.R."/>
            <person name="Celniker S.E."/>
            <person name="de Grey A.D.N.J."/>
            <person name="Drysdale R.A."/>
            <person name="Harris N.L."/>
            <person name="Richter J."/>
            <person name="Russo S."/>
            <person name="Schroeder A.J."/>
            <person name="Shu S.Q."/>
            <person name="Stapleton M."/>
            <person name="Yamada C."/>
            <person name="Ashburner M."/>
            <person name="Gelbart W.M."/>
            <person name="Rubin G.M."/>
            <person name="Lewis S.E."/>
        </authorList>
    </citation>
    <scope>GENOME REANNOTATION</scope>
    <source>
        <strain>Berkeley</strain>
    </source>
</reference>
<reference key="3">
    <citation type="journal article" date="2002" name="Genome Biol.">
        <title>A Drosophila full-length cDNA resource.</title>
        <authorList>
            <person name="Stapleton M."/>
            <person name="Carlson J.W."/>
            <person name="Brokstein P."/>
            <person name="Yu C."/>
            <person name="Champe M."/>
            <person name="George R.A."/>
            <person name="Guarin H."/>
            <person name="Kronmiller B."/>
            <person name="Pacleb J.M."/>
            <person name="Park S."/>
            <person name="Wan K.H."/>
            <person name="Rubin G.M."/>
            <person name="Celniker S.E."/>
        </authorList>
    </citation>
    <scope>NUCLEOTIDE SEQUENCE [LARGE SCALE MRNA]</scope>
    <source>
        <strain>Berkeley</strain>
        <tissue>Embryo</tissue>
    </source>
</reference>
<reference key="4">
    <citation type="journal article" date="2022" name="Nat. Cell Biol.">
        <title>Elongator stabilizes microtubules to control central spindle asymmetry and polarized trafficking of cell fate determinants.</title>
        <authorList>
            <person name="Planelles-Herrero V.J."/>
            <person name="Bittleston A."/>
            <person name="Seum C."/>
            <person name="Daeden A."/>
            <person name="Gaitan M.G."/>
            <person name="Derivery E."/>
        </authorList>
    </citation>
    <scope>DISRUPTION PHENOTYPE</scope>
</reference>
<accession>Q7JWW5</accession>
<sequence>MHIICKSQCGNRAALKRPKTGDALCKECFFAAFEAEIHHTISSSNLFRRGEKVAVAASGGKDSTVLAHVLKLLNERHNYGLELVLLSIDEGITGYRDDSLETVKQNRDDYQMPLKILSYEELYGWTMDRIVAQIGRSNNCTFCGVFRRQALDRGAKLLGVDSIATGHNADDIAETVLMNVLRGDTARLRRCTSIRTGGGEDTIPRVKPLKYSYEKEIVMYAHYKKLVYFSTECVFAPNAYRGHARAFLKDLEKVRPSVIMDIIYSGEQLRFKDTVKKPERGTCTRCGFVSSQQPCKACVLLEGLNRGLPKLGIGKKSKGERMIAKQNQELALRERANLVKNDF</sequence>
<gene>
    <name evidence="3" type="primary">Ctu1</name>
    <name evidence="3" type="ORF">CG8078</name>
</gene>
<comment type="function">
    <text evidence="1">Plays a central role in 2-thiolation of mcm(5)S(2)U at tRNA wobble positions of tRNA(Lys), tRNA(Glu) and tRNA(Gln). Directly binds tRNAs and probably acts by catalyzing adenylation of tRNAs, an intermediate required for 2-thiolation. It is unclear whether it acts as a sulfurtransferase that transfers sulfur from thiocarboxylated URM1 onto the uridine of tRNAs at wobble position.</text>
</comment>
<comment type="pathway">
    <text evidence="1">tRNA modification; 5-methoxycarbonylmethyl-2-thiouridine-tRNA biosynthesis.</text>
</comment>
<comment type="subcellular location">
    <subcellularLocation>
        <location evidence="1">Cytoplasm</location>
    </subcellularLocation>
</comment>
<comment type="disruption phenotype">
    <text evidence="2">RNAi-mediated knockdown is lethal in larval third instar (L3) stage.</text>
</comment>
<comment type="similarity">
    <text evidence="1">Belongs to the TtcA family. CTU1/NCS6/ATPBD3 subfamily.</text>
</comment>
<organism>
    <name type="scientific">Drosophila melanogaster</name>
    <name type="common">Fruit fly</name>
    <dbReference type="NCBI Taxonomy" id="7227"/>
    <lineage>
        <taxon>Eukaryota</taxon>
        <taxon>Metazoa</taxon>
        <taxon>Ecdysozoa</taxon>
        <taxon>Arthropoda</taxon>
        <taxon>Hexapoda</taxon>
        <taxon>Insecta</taxon>
        <taxon>Pterygota</taxon>
        <taxon>Neoptera</taxon>
        <taxon>Endopterygota</taxon>
        <taxon>Diptera</taxon>
        <taxon>Brachycera</taxon>
        <taxon>Muscomorpha</taxon>
        <taxon>Ephydroidea</taxon>
        <taxon>Drosophilidae</taxon>
        <taxon>Drosophila</taxon>
        <taxon>Sophophora</taxon>
    </lineage>
</organism>
<feature type="chain" id="PRO_0000368244" description="Cytoplasmic tRNA 2-thiolation protein 1">
    <location>
        <begin position="1"/>
        <end position="343"/>
    </location>
</feature>
<dbReference type="EC" id="2.7.7.-" evidence="1"/>
<dbReference type="EMBL" id="AE013599">
    <property type="protein sequence ID" value="AAF58991.1"/>
    <property type="molecule type" value="Genomic_DNA"/>
</dbReference>
<dbReference type="EMBL" id="AY102671">
    <property type="protein sequence ID" value="AAM27500.1"/>
    <property type="molecule type" value="mRNA"/>
</dbReference>
<dbReference type="RefSeq" id="NP_610451.1">
    <property type="nucleotide sequence ID" value="NM_136607.2"/>
</dbReference>
<dbReference type="SMR" id="Q7JWW5"/>
<dbReference type="BioGRID" id="61758">
    <property type="interactions" value="3"/>
</dbReference>
<dbReference type="FunCoup" id="Q7JWW5">
    <property type="interactions" value="437"/>
</dbReference>
<dbReference type="IntAct" id="Q7JWW5">
    <property type="interactions" value="2"/>
</dbReference>
<dbReference type="STRING" id="7227.FBpp0087712"/>
<dbReference type="PaxDb" id="7227-FBpp0087712"/>
<dbReference type="DNASU" id="35920"/>
<dbReference type="EnsemblMetazoa" id="FBtr0088631">
    <property type="protein sequence ID" value="FBpp0087712"/>
    <property type="gene ID" value="FBgn0033375"/>
</dbReference>
<dbReference type="GeneID" id="35920"/>
<dbReference type="KEGG" id="dme:Dmel_CG8078"/>
<dbReference type="UCSC" id="CG8078-RA">
    <property type="organism name" value="d. melanogaster"/>
</dbReference>
<dbReference type="AGR" id="FB:FBgn0033375"/>
<dbReference type="CTD" id="90353"/>
<dbReference type="FlyBase" id="FBgn0033375">
    <property type="gene designation" value="Ctu1"/>
</dbReference>
<dbReference type="VEuPathDB" id="VectorBase:FBgn0033375"/>
<dbReference type="eggNOG" id="KOG2840">
    <property type="taxonomic scope" value="Eukaryota"/>
</dbReference>
<dbReference type="GeneTree" id="ENSGT00390000001041"/>
<dbReference type="HOGENOM" id="CLU_026481_1_2_1"/>
<dbReference type="InParanoid" id="Q7JWW5"/>
<dbReference type="OMA" id="KPVRGIC"/>
<dbReference type="OrthoDB" id="198857at2759"/>
<dbReference type="PhylomeDB" id="Q7JWW5"/>
<dbReference type="UniPathway" id="UPA00988"/>
<dbReference type="BioGRID-ORCS" id="35920">
    <property type="hits" value="1 hit in 1 CRISPR screen"/>
</dbReference>
<dbReference type="GenomeRNAi" id="35920"/>
<dbReference type="PRO" id="PR:Q7JWW5"/>
<dbReference type="Proteomes" id="UP000000803">
    <property type="component" value="Chromosome 2R"/>
</dbReference>
<dbReference type="Bgee" id="FBgn0033375">
    <property type="expression patterns" value="Expressed in posterior terminal follicle cell in ovary and 89 other cell types or tissues"/>
</dbReference>
<dbReference type="GO" id="GO:0005829">
    <property type="term" value="C:cytosol"/>
    <property type="evidence" value="ECO:0000250"/>
    <property type="project" value="UniProtKB"/>
</dbReference>
<dbReference type="GO" id="GO:0002144">
    <property type="term" value="C:cytosolic tRNA wobble base thiouridylase complex"/>
    <property type="evidence" value="ECO:0000318"/>
    <property type="project" value="GO_Central"/>
</dbReference>
<dbReference type="GO" id="GO:0016779">
    <property type="term" value="F:nucleotidyltransferase activity"/>
    <property type="evidence" value="ECO:0007669"/>
    <property type="project" value="UniProtKB-UniRule"/>
</dbReference>
<dbReference type="GO" id="GO:0016783">
    <property type="term" value="F:sulfurtransferase activity"/>
    <property type="evidence" value="ECO:0000250"/>
    <property type="project" value="FlyBase"/>
</dbReference>
<dbReference type="GO" id="GO:0000049">
    <property type="term" value="F:tRNA binding"/>
    <property type="evidence" value="ECO:0000250"/>
    <property type="project" value="UniProtKB"/>
</dbReference>
<dbReference type="GO" id="GO:0032447">
    <property type="term" value="P:protein urmylation"/>
    <property type="evidence" value="ECO:0007669"/>
    <property type="project" value="UniProtKB-UniRule"/>
</dbReference>
<dbReference type="GO" id="GO:0034227">
    <property type="term" value="P:tRNA thio-modification"/>
    <property type="evidence" value="ECO:0000250"/>
    <property type="project" value="UniProtKB"/>
</dbReference>
<dbReference type="GO" id="GO:0002143">
    <property type="term" value="P:tRNA wobble position uridine thiolation"/>
    <property type="evidence" value="ECO:0000318"/>
    <property type="project" value="GO_Central"/>
</dbReference>
<dbReference type="GO" id="GO:0002098">
    <property type="term" value="P:tRNA wobble uridine modification"/>
    <property type="evidence" value="ECO:0000250"/>
    <property type="project" value="UniProtKB"/>
</dbReference>
<dbReference type="CDD" id="cd01713">
    <property type="entry name" value="CTU1-like"/>
    <property type="match status" value="1"/>
</dbReference>
<dbReference type="FunFam" id="3.40.50.620:FF:000054">
    <property type="entry name" value="Cytoplasmic tRNA 2-thiolation protein 1"/>
    <property type="match status" value="1"/>
</dbReference>
<dbReference type="Gene3D" id="3.40.50.620">
    <property type="entry name" value="HUPs"/>
    <property type="match status" value="1"/>
</dbReference>
<dbReference type="HAMAP" id="MF_03053">
    <property type="entry name" value="CTU1"/>
    <property type="match status" value="1"/>
</dbReference>
<dbReference type="InterPro" id="IPR056369">
    <property type="entry name" value="CTU1-like_ATP-bd"/>
</dbReference>
<dbReference type="InterPro" id="IPR032442">
    <property type="entry name" value="CTU1_C"/>
</dbReference>
<dbReference type="InterPro" id="IPR000541">
    <property type="entry name" value="Ncs6/Tuc1/Ctu1"/>
</dbReference>
<dbReference type="InterPro" id="IPR014729">
    <property type="entry name" value="Rossmann-like_a/b/a_fold"/>
</dbReference>
<dbReference type="InterPro" id="IPR011063">
    <property type="entry name" value="TilS/TtcA_N"/>
</dbReference>
<dbReference type="InterPro" id="IPR035107">
    <property type="entry name" value="tRNA_thiolation_TtcA_Ctu1"/>
</dbReference>
<dbReference type="InterPro" id="IPR020554">
    <property type="entry name" value="UPF0021_CS"/>
</dbReference>
<dbReference type="NCBIfam" id="TIGR00269">
    <property type="entry name" value="TIGR00269 family protein"/>
    <property type="match status" value="1"/>
</dbReference>
<dbReference type="PANTHER" id="PTHR11807">
    <property type="entry name" value="ATPASES OF THE PP SUPERFAMILY-RELATED"/>
    <property type="match status" value="1"/>
</dbReference>
<dbReference type="PANTHER" id="PTHR11807:SF12">
    <property type="entry name" value="CYTOPLASMIC TRNA 2-THIOLATION PROTEIN 1"/>
    <property type="match status" value="1"/>
</dbReference>
<dbReference type="Pfam" id="PF01171">
    <property type="entry name" value="ATP_bind_3"/>
    <property type="match status" value="1"/>
</dbReference>
<dbReference type="Pfam" id="PF16503">
    <property type="entry name" value="zn-ribbon_14"/>
    <property type="match status" value="1"/>
</dbReference>
<dbReference type="PIRSF" id="PIRSF004976">
    <property type="entry name" value="ATPase_YdaO"/>
    <property type="match status" value="1"/>
</dbReference>
<dbReference type="SUPFAM" id="SSF52402">
    <property type="entry name" value="Adenine nucleotide alpha hydrolases-like"/>
    <property type="match status" value="1"/>
</dbReference>
<dbReference type="PROSITE" id="PS01263">
    <property type="entry name" value="UPF0021"/>
    <property type="match status" value="1"/>
</dbReference>
<keyword id="KW-0963">Cytoplasm</keyword>
<keyword id="KW-1185">Reference proteome</keyword>
<keyword id="KW-0694">RNA-binding</keyword>
<keyword id="KW-0808">Transferase</keyword>
<keyword id="KW-0819">tRNA processing</keyword>
<keyword id="KW-0820">tRNA-binding</keyword>
<name>CTU1_DROME</name>
<proteinExistence type="evidence at transcript level"/>
<evidence type="ECO:0000255" key="1">
    <source>
        <dbReference type="HAMAP-Rule" id="MF_03053"/>
    </source>
</evidence>
<evidence type="ECO:0000269" key="2">
    <source>
    </source>
</evidence>
<evidence type="ECO:0000312" key="3">
    <source>
        <dbReference type="FlyBase" id="FBgn0033375"/>
    </source>
</evidence>